<keyword id="KW-1003">Cell membrane</keyword>
<keyword id="KW-0342">GTP-binding</keyword>
<keyword id="KW-0378">Hydrolase</keyword>
<keyword id="KW-0449">Lipoprotein</keyword>
<keyword id="KW-0472">Membrane</keyword>
<keyword id="KW-0488">Methylation</keyword>
<keyword id="KW-0547">Nucleotide-binding</keyword>
<keyword id="KW-0636">Prenylation</keyword>
<keyword id="KW-1185">Reference proteome</keyword>
<proteinExistence type="inferred from homology"/>
<comment type="function">
    <text>Ras proteins bind GDP/GTP and possess intrinsic GTPase activity.</text>
</comment>
<comment type="catalytic activity">
    <reaction evidence="2">
        <text>GTP + H2O = GDP + phosphate + H(+)</text>
        <dbReference type="Rhea" id="RHEA:19669"/>
        <dbReference type="ChEBI" id="CHEBI:15377"/>
        <dbReference type="ChEBI" id="CHEBI:15378"/>
        <dbReference type="ChEBI" id="CHEBI:37565"/>
        <dbReference type="ChEBI" id="CHEBI:43474"/>
        <dbReference type="ChEBI" id="CHEBI:58189"/>
        <dbReference type="EC" id="3.6.5.2"/>
    </reaction>
</comment>
<comment type="subcellular location">
    <subcellularLocation>
        <location evidence="4">Cell membrane</location>
        <topology evidence="4">Lipid-anchor</topology>
        <orientation evidence="4">Cytoplasmic side</orientation>
    </subcellularLocation>
</comment>
<comment type="similarity">
    <text evidence="4">Belongs to the small GTPase superfamily. Ras family.</text>
</comment>
<dbReference type="EC" id="3.6.5.2" evidence="2"/>
<dbReference type="EMBL" id="D16137">
    <property type="protein sequence ID" value="BAA03708.1"/>
    <property type="molecule type" value="Genomic_DNA"/>
</dbReference>
<dbReference type="EMBL" id="AL513444">
    <property type="protein sequence ID" value="CAC28712.1"/>
    <property type="molecule type" value="Genomic_DNA"/>
</dbReference>
<dbReference type="EMBL" id="CM002240">
    <property type="protein sequence ID" value="EAA32107.1"/>
    <property type="molecule type" value="Genomic_DNA"/>
</dbReference>
<dbReference type="SMR" id="Q01387"/>
<dbReference type="STRING" id="367110.Q01387"/>
<dbReference type="PaxDb" id="5141-EFNCRP00000003452"/>
<dbReference type="EnsemblFungi" id="EAA32107">
    <property type="protein sequence ID" value="EAA32107"/>
    <property type="gene ID" value="NCU03616"/>
</dbReference>
<dbReference type="KEGG" id="ncr:NCU03616"/>
<dbReference type="VEuPathDB" id="FungiDB:NCU03616"/>
<dbReference type="HOGENOM" id="CLU_041217_9_8_1"/>
<dbReference type="InParanoid" id="Q01387"/>
<dbReference type="OMA" id="CEFTEAS"/>
<dbReference type="OrthoDB" id="5976022at2759"/>
<dbReference type="Proteomes" id="UP000001805">
    <property type="component" value="Chromosome 2, Linkage Group V"/>
</dbReference>
<dbReference type="GO" id="GO:0005886">
    <property type="term" value="C:plasma membrane"/>
    <property type="evidence" value="ECO:0000318"/>
    <property type="project" value="GO_Central"/>
</dbReference>
<dbReference type="GO" id="GO:0003925">
    <property type="term" value="F:G protein activity"/>
    <property type="evidence" value="ECO:0007669"/>
    <property type="project" value="UniProtKB-EC"/>
</dbReference>
<dbReference type="GO" id="GO:0019003">
    <property type="term" value="F:GDP binding"/>
    <property type="evidence" value="ECO:0000318"/>
    <property type="project" value="GO_Central"/>
</dbReference>
<dbReference type="GO" id="GO:0005525">
    <property type="term" value="F:GTP binding"/>
    <property type="evidence" value="ECO:0000318"/>
    <property type="project" value="GO_Central"/>
</dbReference>
<dbReference type="GO" id="GO:0003924">
    <property type="term" value="F:GTPase activity"/>
    <property type="evidence" value="ECO:0000318"/>
    <property type="project" value="GO_Central"/>
</dbReference>
<dbReference type="GO" id="GO:0007165">
    <property type="term" value="P:signal transduction"/>
    <property type="evidence" value="ECO:0007669"/>
    <property type="project" value="InterPro"/>
</dbReference>
<dbReference type="CDD" id="cd04144">
    <property type="entry name" value="Ras2"/>
    <property type="match status" value="1"/>
</dbReference>
<dbReference type="FunFam" id="3.40.50.300:FF:000654">
    <property type="entry name" value="Small g-protein ras2"/>
    <property type="match status" value="1"/>
</dbReference>
<dbReference type="Gene3D" id="3.40.50.300">
    <property type="entry name" value="P-loop containing nucleotide triphosphate hydrolases"/>
    <property type="match status" value="1"/>
</dbReference>
<dbReference type="InterPro" id="IPR027417">
    <property type="entry name" value="P-loop_NTPase"/>
</dbReference>
<dbReference type="InterPro" id="IPR005225">
    <property type="entry name" value="Small_GTP-bd"/>
</dbReference>
<dbReference type="InterPro" id="IPR001806">
    <property type="entry name" value="Small_GTPase"/>
</dbReference>
<dbReference type="InterPro" id="IPR020849">
    <property type="entry name" value="Small_GTPase_Ras-type"/>
</dbReference>
<dbReference type="NCBIfam" id="TIGR00231">
    <property type="entry name" value="small_GTP"/>
    <property type="match status" value="1"/>
</dbReference>
<dbReference type="PANTHER" id="PTHR24070">
    <property type="entry name" value="RAS, DI-RAS, AND RHEB FAMILY MEMBERS OF SMALL GTPASE SUPERFAMILY"/>
    <property type="match status" value="1"/>
</dbReference>
<dbReference type="Pfam" id="PF00071">
    <property type="entry name" value="Ras"/>
    <property type="match status" value="1"/>
</dbReference>
<dbReference type="PRINTS" id="PR00449">
    <property type="entry name" value="RASTRNSFRMNG"/>
</dbReference>
<dbReference type="SMART" id="SM00175">
    <property type="entry name" value="RAB"/>
    <property type="match status" value="1"/>
</dbReference>
<dbReference type="SMART" id="SM00176">
    <property type="entry name" value="RAN"/>
    <property type="match status" value="1"/>
</dbReference>
<dbReference type="SMART" id="SM00173">
    <property type="entry name" value="RAS"/>
    <property type="match status" value="1"/>
</dbReference>
<dbReference type="SMART" id="SM00174">
    <property type="entry name" value="RHO"/>
    <property type="match status" value="1"/>
</dbReference>
<dbReference type="SUPFAM" id="SSF52540">
    <property type="entry name" value="P-loop containing nucleoside triphosphate hydrolases"/>
    <property type="match status" value="1"/>
</dbReference>
<dbReference type="PROSITE" id="PS51421">
    <property type="entry name" value="RAS"/>
    <property type="match status" value="1"/>
</dbReference>
<feature type="chain" id="PRO_0000082705" description="Protein ras-2">
    <location>
        <begin position="1"/>
        <end position="226"/>
    </location>
</feature>
<feature type="propeptide" id="PRO_0000281359" description="Removed in mature form" evidence="1">
    <location>
        <begin position="227"/>
        <end position="229"/>
    </location>
</feature>
<feature type="region of interest" description="Disordered" evidence="3">
    <location>
        <begin position="109"/>
        <end position="132"/>
    </location>
</feature>
<feature type="region of interest" description="Disordered" evidence="3">
    <location>
        <begin position="188"/>
        <end position="229"/>
    </location>
</feature>
<feature type="short sequence motif" description="Effector region" evidence="4">
    <location>
        <begin position="37"/>
        <end position="45"/>
    </location>
</feature>
<feature type="compositionally biased region" description="Low complexity" evidence="3">
    <location>
        <begin position="111"/>
        <end position="126"/>
    </location>
</feature>
<feature type="compositionally biased region" description="Basic and acidic residues" evidence="3">
    <location>
        <begin position="209"/>
        <end position="219"/>
    </location>
</feature>
<feature type="compositionally biased region" description="Basic residues" evidence="3">
    <location>
        <begin position="220"/>
        <end position="229"/>
    </location>
</feature>
<feature type="binding site" evidence="1">
    <location>
        <begin position="15"/>
        <end position="22"/>
    </location>
    <ligand>
        <name>GTP</name>
        <dbReference type="ChEBI" id="CHEBI:37565"/>
    </ligand>
</feature>
<feature type="binding site" evidence="1">
    <location>
        <begin position="62"/>
        <end position="66"/>
    </location>
    <ligand>
        <name>GTP</name>
        <dbReference type="ChEBI" id="CHEBI:37565"/>
    </ligand>
</feature>
<feature type="binding site" evidence="1">
    <location>
        <begin position="140"/>
        <end position="143"/>
    </location>
    <ligand>
        <name>GTP</name>
        <dbReference type="ChEBI" id="CHEBI:37565"/>
    </ligand>
</feature>
<feature type="modified residue" description="Cysteine methyl ester" evidence="1">
    <location>
        <position position="226"/>
    </location>
</feature>
<feature type="lipid moiety-binding region" description="S-farnesyl cysteine" evidence="1">
    <location>
        <position position="226"/>
    </location>
</feature>
<feature type="sequence variant">
    <original>S</original>
    <variation>F</variation>
    <location>
        <position position="121"/>
    </location>
</feature>
<feature type="sequence conflict" description="In Ref. 1; BAA03708." evidence="4" ref="1">
    <original>W</original>
    <variation>R</variation>
    <location>
        <position position="76"/>
    </location>
</feature>
<protein>
    <recommendedName>
        <fullName>Protein ras-2</fullName>
        <ecNumber evidence="2">3.6.5.2</ecNumber>
    </recommendedName>
</protein>
<reference key="1">
    <citation type="journal article" date="1997" name="Mol. Gen. Genet.">
        <title>A ras homologue of Neurospora crassa regulates morphology.</title>
        <authorList>
            <person name="Kana-Uchi A."/>
            <person name="Yamashiro C.T."/>
            <person name="Tanabe S."/>
            <person name="Murayama T."/>
        </authorList>
    </citation>
    <scope>NUCLEOTIDE SEQUENCE [GENOMIC DNA]</scope>
    <source>
        <strain>74-OR-IVA</strain>
    </source>
</reference>
<reference key="2">
    <citation type="journal article" date="2003" name="Nucleic Acids Res.">
        <title>What's in the genome of a filamentous fungus? Analysis of the Neurospora genome sequence.</title>
        <authorList>
            <person name="Mannhaupt G."/>
            <person name="Montrone C."/>
            <person name="Haase D."/>
            <person name="Mewes H.-W."/>
            <person name="Aign V."/>
            <person name="Hoheisel J.D."/>
            <person name="Fartmann B."/>
            <person name="Nyakatura G."/>
            <person name="Kempken F."/>
            <person name="Maier J."/>
            <person name="Schulte U."/>
        </authorList>
    </citation>
    <scope>NUCLEOTIDE SEQUENCE [LARGE SCALE GENOMIC DNA]</scope>
    <source>
        <strain>ATCC 24698 / 74-OR23-1A / CBS 708.71 / DSM 1257 / FGSC 987</strain>
    </source>
</reference>
<reference key="3">
    <citation type="journal article" date="2003" name="Nature">
        <title>The genome sequence of the filamentous fungus Neurospora crassa.</title>
        <authorList>
            <person name="Galagan J.E."/>
            <person name="Calvo S.E."/>
            <person name="Borkovich K.A."/>
            <person name="Selker E.U."/>
            <person name="Read N.D."/>
            <person name="Jaffe D.B."/>
            <person name="FitzHugh W."/>
            <person name="Ma L.-J."/>
            <person name="Smirnov S."/>
            <person name="Purcell S."/>
            <person name="Rehman B."/>
            <person name="Elkins T."/>
            <person name="Engels R."/>
            <person name="Wang S."/>
            <person name="Nielsen C.B."/>
            <person name="Butler J."/>
            <person name="Endrizzi M."/>
            <person name="Qui D."/>
            <person name="Ianakiev P."/>
            <person name="Bell-Pedersen D."/>
            <person name="Nelson M.A."/>
            <person name="Werner-Washburne M."/>
            <person name="Selitrennikoff C.P."/>
            <person name="Kinsey J.A."/>
            <person name="Braun E.L."/>
            <person name="Zelter A."/>
            <person name="Schulte U."/>
            <person name="Kothe G.O."/>
            <person name="Jedd G."/>
            <person name="Mewes H.-W."/>
            <person name="Staben C."/>
            <person name="Marcotte E."/>
            <person name="Greenberg D."/>
            <person name="Roy A."/>
            <person name="Foley K."/>
            <person name="Naylor J."/>
            <person name="Stange-Thomann N."/>
            <person name="Barrett R."/>
            <person name="Gnerre S."/>
            <person name="Kamal M."/>
            <person name="Kamvysselis M."/>
            <person name="Mauceli E.W."/>
            <person name="Bielke C."/>
            <person name="Rudd S."/>
            <person name="Frishman D."/>
            <person name="Krystofova S."/>
            <person name="Rasmussen C."/>
            <person name="Metzenberg R.L."/>
            <person name="Perkins D.D."/>
            <person name="Kroken S."/>
            <person name="Cogoni C."/>
            <person name="Macino G."/>
            <person name="Catcheside D.E.A."/>
            <person name="Li W."/>
            <person name="Pratt R.J."/>
            <person name="Osmani S.A."/>
            <person name="DeSouza C.P.C."/>
            <person name="Glass N.L."/>
            <person name="Orbach M.J."/>
            <person name="Berglund J.A."/>
            <person name="Voelker R."/>
            <person name="Yarden O."/>
            <person name="Plamann M."/>
            <person name="Seiler S."/>
            <person name="Dunlap J.C."/>
            <person name="Radford A."/>
            <person name="Aramayo R."/>
            <person name="Natvig D.O."/>
            <person name="Alex L.A."/>
            <person name="Mannhaupt G."/>
            <person name="Ebbole D.J."/>
            <person name="Freitag M."/>
            <person name="Paulsen I."/>
            <person name="Sachs M.S."/>
            <person name="Lander E.S."/>
            <person name="Nusbaum C."/>
            <person name="Birren B.W."/>
        </authorList>
    </citation>
    <scope>NUCLEOTIDE SEQUENCE [LARGE SCALE GENOMIC DNA]</scope>
    <source>
        <strain>ATCC 24698 / 74-OR23-1A / CBS 708.71 / DSM 1257 / FGSC 987</strain>
    </source>
</reference>
<gene>
    <name type="primary">ras-2</name>
    <name type="ORF">B11N2.310</name>
    <name type="ORF">NCU03616</name>
</gene>
<name>RAS2_NEUCR</name>
<sequence>MVGNKQVLYKLVVLGDGGVGKTALTIQLCLEHFVETYDPTIEDSYRKQVVIDGQACMLEVLDTAGQEEYTALRDQWIRDGEGFVLVYSISSRSSFARIKKFHHQIQRVKESTSSPSAYPGSSPLAATNPSAPVPIMLVGNKSDRVTEREVSTQEGHALARELGCEFTEASAKTRTNVEKAFYDVVKQLRKQRQQGQSTPRALPPSGNSKSEKYSGTEKPKRPRGKCLII</sequence>
<evidence type="ECO:0000250" key="1"/>
<evidence type="ECO:0000250" key="2">
    <source>
        <dbReference type="UniProtKB" id="P01112"/>
    </source>
</evidence>
<evidence type="ECO:0000256" key="3">
    <source>
        <dbReference type="SAM" id="MobiDB-lite"/>
    </source>
</evidence>
<evidence type="ECO:0000305" key="4"/>
<organism>
    <name type="scientific">Neurospora crassa (strain ATCC 24698 / 74-OR23-1A / CBS 708.71 / DSM 1257 / FGSC 987)</name>
    <dbReference type="NCBI Taxonomy" id="367110"/>
    <lineage>
        <taxon>Eukaryota</taxon>
        <taxon>Fungi</taxon>
        <taxon>Dikarya</taxon>
        <taxon>Ascomycota</taxon>
        <taxon>Pezizomycotina</taxon>
        <taxon>Sordariomycetes</taxon>
        <taxon>Sordariomycetidae</taxon>
        <taxon>Sordariales</taxon>
        <taxon>Sordariaceae</taxon>
        <taxon>Neurospora</taxon>
    </lineage>
</organism>
<accession>Q01387</accession>
<accession>Q7RVD3</accession>
<accession>Q9C297</accession>